<feature type="chain" id="PRO_0000277541" description="Putative NAD(P)H nitroreductase SH0546">
    <location>
        <begin position="1"/>
        <end position="218"/>
    </location>
</feature>
<comment type="cofactor">
    <cofactor evidence="1">
        <name>FMN</name>
        <dbReference type="ChEBI" id="CHEBI:58210"/>
    </cofactor>
</comment>
<comment type="similarity">
    <text evidence="1">Belongs to the nitroreductase family.</text>
</comment>
<reference key="1">
    <citation type="journal article" date="2005" name="J. Bacteriol.">
        <title>Whole-genome sequencing of Staphylococcus haemolyticus uncovers the extreme plasticity of its genome and the evolution of human-colonizing staphylococcal species.</title>
        <authorList>
            <person name="Takeuchi F."/>
            <person name="Watanabe S."/>
            <person name="Baba T."/>
            <person name="Yuzawa H."/>
            <person name="Ito T."/>
            <person name="Morimoto Y."/>
            <person name="Kuroda M."/>
            <person name="Cui L."/>
            <person name="Takahashi M."/>
            <person name="Ankai A."/>
            <person name="Baba S."/>
            <person name="Fukui S."/>
            <person name="Lee J.C."/>
            <person name="Hiramatsu K."/>
        </authorList>
    </citation>
    <scope>NUCLEOTIDE SEQUENCE [LARGE SCALE GENOMIC DNA]</scope>
    <source>
        <strain>JCSC1435</strain>
    </source>
</reference>
<name>Y546_STAHJ</name>
<sequence length="218" mass="25036">MSSMQETIINAFNFRHATKEFDPEKKVSESDFHTILETGRLSPSSLGLEPWRFVVIENEDLKEKLKPYSWGAQKQLNTASRFVIILARKNVTADSEYVQHIIRGIKKYEESTIPAVEDKFNNFQTNFHINDNERTLLDWASKQTYIALANMMTSAALLGIDSCPMEGFDLDKVTEILAEENVVDTEHFAPSVMVAFGYRKEEPKDKVRQPAEDVIEWI</sequence>
<protein>
    <recommendedName>
        <fullName>Putative NAD(P)H nitroreductase SH0546</fullName>
        <ecNumber>1.-.-.-</ecNumber>
    </recommendedName>
</protein>
<accession>Q4L920</accession>
<organism>
    <name type="scientific">Staphylococcus haemolyticus (strain JCSC1435)</name>
    <dbReference type="NCBI Taxonomy" id="279808"/>
    <lineage>
        <taxon>Bacteria</taxon>
        <taxon>Bacillati</taxon>
        <taxon>Bacillota</taxon>
        <taxon>Bacilli</taxon>
        <taxon>Bacillales</taxon>
        <taxon>Staphylococcaceae</taxon>
        <taxon>Staphylococcus</taxon>
    </lineage>
</organism>
<gene>
    <name type="ordered locus">SH0546</name>
</gene>
<proteinExistence type="inferred from homology"/>
<evidence type="ECO:0000305" key="1"/>
<keyword id="KW-0285">Flavoprotein</keyword>
<keyword id="KW-0288">FMN</keyword>
<keyword id="KW-0520">NAD</keyword>
<keyword id="KW-0521">NADP</keyword>
<keyword id="KW-0560">Oxidoreductase</keyword>
<dbReference type="EC" id="1.-.-.-"/>
<dbReference type="EMBL" id="AP006716">
    <property type="protein sequence ID" value="BAE03855.1"/>
    <property type="molecule type" value="Genomic_DNA"/>
</dbReference>
<dbReference type="RefSeq" id="WP_011274871.1">
    <property type="nucleotide sequence ID" value="NC_007168.1"/>
</dbReference>
<dbReference type="SMR" id="Q4L920"/>
<dbReference type="KEGG" id="sha:SH0546"/>
<dbReference type="eggNOG" id="COG0778">
    <property type="taxonomic scope" value="Bacteria"/>
</dbReference>
<dbReference type="HOGENOM" id="CLU_070764_4_1_9"/>
<dbReference type="OrthoDB" id="9809288at2"/>
<dbReference type="Proteomes" id="UP000000543">
    <property type="component" value="Chromosome"/>
</dbReference>
<dbReference type="GO" id="GO:0005829">
    <property type="term" value="C:cytosol"/>
    <property type="evidence" value="ECO:0007669"/>
    <property type="project" value="TreeGrafter"/>
</dbReference>
<dbReference type="GO" id="GO:0046857">
    <property type="term" value="F:oxidoreductase activity, acting on other nitrogenous compounds as donors, with NAD or NADP as acceptor"/>
    <property type="evidence" value="ECO:0007669"/>
    <property type="project" value="TreeGrafter"/>
</dbReference>
<dbReference type="GO" id="GO:0046256">
    <property type="term" value="P:2,4,6-trinitrotoluene catabolic process"/>
    <property type="evidence" value="ECO:0007669"/>
    <property type="project" value="TreeGrafter"/>
</dbReference>
<dbReference type="CDD" id="cd02149">
    <property type="entry name" value="NfsB-like"/>
    <property type="match status" value="1"/>
</dbReference>
<dbReference type="Gene3D" id="3.40.109.10">
    <property type="entry name" value="NADH Oxidase"/>
    <property type="match status" value="1"/>
</dbReference>
<dbReference type="InterPro" id="IPR033878">
    <property type="entry name" value="NfsB-like"/>
</dbReference>
<dbReference type="InterPro" id="IPR029479">
    <property type="entry name" value="Nitroreductase"/>
</dbReference>
<dbReference type="InterPro" id="IPR000415">
    <property type="entry name" value="Nitroreductase-like"/>
</dbReference>
<dbReference type="InterPro" id="IPR050627">
    <property type="entry name" value="Nitroreductase/BluB"/>
</dbReference>
<dbReference type="PANTHER" id="PTHR23026">
    <property type="entry name" value="NADPH NITROREDUCTASE"/>
    <property type="match status" value="1"/>
</dbReference>
<dbReference type="PANTHER" id="PTHR23026:SF125">
    <property type="entry name" value="OXYGEN-INSENSITIVE NAD(P)H NITROREDUCTASE"/>
    <property type="match status" value="1"/>
</dbReference>
<dbReference type="Pfam" id="PF00881">
    <property type="entry name" value="Nitroreductase"/>
    <property type="match status" value="1"/>
</dbReference>
<dbReference type="SUPFAM" id="SSF55469">
    <property type="entry name" value="FMN-dependent nitroreductase-like"/>
    <property type="match status" value="1"/>
</dbReference>